<comment type="function">
    <text evidence="1 6 7">Transcription factor that binds to the octamer motif (5'-ATTTGCAT-3') (PubMed:8441607). Regulates cell type-specific differentiation pathways. Involved in the regulation of keratinocytes differentiation (PubMed:9242494). The POU2F3-POU2AF2/POU2AF3 complex drives the expression of tuft-cell-specific genes, a rare chemosensory cells that coordinate immune and neural functions within mucosal epithelial tissues (By similarity).</text>
</comment>
<comment type="subunit">
    <text evidence="1">Interacts (via the POU domain) with POU2AF1 and POU2AF2 in a DNA-dependent manner; this interaction recruits POU2AF2 to chromatin and increases POU2F3 transactivation activity.</text>
</comment>
<comment type="subcellular location">
    <subcellularLocation>
        <location evidence="7">Nucleus</location>
    </subcellularLocation>
</comment>
<comment type="tissue specificity">
    <text evidence="5 6">Skin, thymus, stomach and testis.</text>
</comment>
<comment type="disruption phenotype">
    <text evidence="7">Mice homozygous for null mutation exhibit defective keratinocyte differentiation, however the skin and coat appear normal.</text>
</comment>
<comment type="similarity">
    <text evidence="10">Belongs to the POU transcription factor family. Class-2 subfamily.</text>
</comment>
<evidence type="ECO:0000250" key="1">
    <source>
        <dbReference type="UniProtKB" id="Q9UKI9"/>
    </source>
</evidence>
<evidence type="ECO:0000255" key="2">
    <source>
        <dbReference type="PROSITE-ProRule" id="PRU00108"/>
    </source>
</evidence>
<evidence type="ECO:0000255" key="3">
    <source>
        <dbReference type="PROSITE-ProRule" id="PRU00530"/>
    </source>
</evidence>
<evidence type="ECO:0000256" key="4">
    <source>
        <dbReference type="SAM" id="MobiDB-lite"/>
    </source>
</evidence>
<evidence type="ECO:0000269" key="5">
    <source>
    </source>
</evidence>
<evidence type="ECO:0000269" key="6">
    <source>
    </source>
</evidence>
<evidence type="ECO:0000269" key="7">
    <source>
    </source>
</evidence>
<evidence type="ECO:0000303" key="8">
    <source>
    </source>
</evidence>
<evidence type="ECO:0000303" key="9">
    <source>
    </source>
</evidence>
<evidence type="ECO:0000305" key="10"/>
<organism>
    <name type="scientific">Mus musculus</name>
    <name type="common">Mouse</name>
    <dbReference type="NCBI Taxonomy" id="10090"/>
    <lineage>
        <taxon>Eukaryota</taxon>
        <taxon>Metazoa</taxon>
        <taxon>Chordata</taxon>
        <taxon>Craniata</taxon>
        <taxon>Vertebrata</taxon>
        <taxon>Euteleostomi</taxon>
        <taxon>Mammalia</taxon>
        <taxon>Eutheria</taxon>
        <taxon>Euarchontoglires</taxon>
        <taxon>Glires</taxon>
        <taxon>Rodentia</taxon>
        <taxon>Myomorpha</taxon>
        <taxon>Muroidea</taxon>
        <taxon>Muridae</taxon>
        <taxon>Murinae</taxon>
        <taxon>Mus</taxon>
        <taxon>Mus</taxon>
    </lineage>
</organism>
<feature type="chain" id="PRO_0000100718" description="POU domain, class 2, transcription factor 3">
    <location>
        <begin position="1"/>
        <end position="431"/>
    </location>
</feature>
<feature type="domain" description="POU-specific" evidence="3">
    <location>
        <begin position="176"/>
        <end position="250"/>
    </location>
</feature>
<feature type="DNA-binding region" description="Homeobox" evidence="2">
    <location>
        <begin position="274"/>
        <end position="333"/>
    </location>
</feature>
<feature type="region of interest" description="Disordered" evidence="4">
    <location>
        <begin position="1"/>
        <end position="39"/>
    </location>
</feature>
<feature type="region of interest" description="Disordered" evidence="4">
    <location>
        <begin position="130"/>
        <end position="180"/>
    </location>
</feature>
<feature type="region of interest" description="Disordered" evidence="4">
    <location>
        <begin position="248"/>
        <end position="267"/>
    </location>
</feature>
<feature type="region of interest" description="Disordered" evidence="4">
    <location>
        <begin position="352"/>
        <end position="419"/>
    </location>
</feature>
<feature type="compositionally biased region" description="Low complexity" evidence="4">
    <location>
        <begin position="251"/>
        <end position="267"/>
    </location>
</feature>
<feature type="compositionally biased region" description="Low complexity" evidence="4">
    <location>
        <begin position="352"/>
        <end position="364"/>
    </location>
</feature>
<feature type="compositionally biased region" description="Low complexity" evidence="4">
    <location>
        <begin position="374"/>
        <end position="390"/>
    </location>
</feature>
<feature type="compositionally biased region" description="Low complexity" evidence="4">
    <location>
        <begin position="398"/>
        <end position="419"/>
    </location>
</feature>
<feature type="sequence conflict" description="In Ref. 2; AAA16855." evidence="10" ref="2">
    <original>A</original>
    <variation>R</variation>
    <location>
        <position position="139"/>
    </location>
</feature>
<feature type="sequence conflict" description="In Ref. 2; AAA16855." evidence="10" ref="2">
    <original>A</original>
    <variation>P</variation>
    <location>
        <position position="249"/>
    </location>
</feature>
<feature type="sequence conflict" description="In Ref. 1; CAA79222." evidence="10" ref="1">
    <original>PTASQNNSKAAMNSSSSSSFNSSGSWYRWNHPTYLH</original>
    <variation>SQVWALLT</variation>
    <location>
        <begin position="396"/>
        <end position="431"/>
    </location>
</feature>
<proteinExistence type="evidence at transcript level"/>
<gene>
    <name type="primary">Pou2f3</name>
    <name type="synonym">Epoc1</name>
    <name type="synonym">Oct11</name>
    <name type="synonym">Otf-11</name>
    <name type="synonym">Otf11</name>
</gene>
<protein>
    <recommendedName>
        <fullName>POU domain, class 2, transcription factor 3</fullName>
    </recommendedName>
    <alternativeName>
        <fullName evidence="8">Epoc-1</fullName>
    </alternativeName>
    <alternativeName>
        <fullName evidence="9">Octamer-binding protein 11</fullName>
        <shortName evidence="9">Oct-11</shortName>
    </alternativeName>
    <alternativeName>
        <fullName>Octamer-binding transcription factor 11</fullName>
        <shortName>OTF-11</shortName>
    </alternativeName>
</protein>
<keyword id="KW-0238">DNA-binding</keyword>
<keyword id="KW-0371">Homeobox</keyword>
<keyword id="KW-0539">Nucleus</keyword>
<keyword id="KW-1185">Reference proteome</keyword>
<keyword id="KW-0804">Transcription</keyword>
<keyword id="KW-0805">Transcription regulation</keyword>
<dbReference type="EMBL" id="Z18537">
    <property type="protein sequence ID" value="CAA79222.1"/>
    <property type="molecule type" value="mRNA"/>
</dbReference>
<dbReference type="EMBL" id="L14677">
    <property type="protein sequence ID" value="AAA16855.1"/>
    <property type="molecule type" value="mRNA"/>
</dbReference>
<dbReference type="EMBL" id="AC173346">
    <property type="status" value="NOT_ANNOTATED_CDS"/>
    <property type="molecule type" value="Genomic_DNA"/>
</dbReference>
<dbReference type="CCDS" id="CCDS40596.1"/>
<dbReference type="PIR" id="S35541">
    <property type="entry name" value="S35541"/>
</dbReference>
<dbReference type="RefSeq" id="NP_035269.2">
    <property type="nucleotide sequence ID" value="NM_011139.2"/>
</dbReference>
<dbReference type="SMR" id="P31362"/>
<dbReference type="FunCoup" id="P31362">
    <property type="interactions" value="1357"/>
</dbReference>
<dbReference type="STRING" id="10090.ENSMUSP00000135115"/>
<dbReference type="GlyGen" id="P31362">
    <property type="glycosylation" value="1 site"/>
</dbReference>
<dbReference type="iPTMnet" id="P31362"/>
<dbReference type="PhosphoSitePlus" id="P31362"/>
<dbReference type="PaxDb" id="10090-ENSMUSP00000135115"/>
<dbReference type="ProteomicsDB" id="289469"/>
<dbReference type="ProteomicsDB" id="344760"/>
<dbReference type="Pumba" id="P31362"/>
<dbReference type="Antibodypedia" id="18868">
    <property type="antibodies" value="131 antibodies from 28 providers"/>
</dbReference>
<dbReference type="DNASU" id="18988"/>
<dbReference type="Ensembl" id="ENSMUST00000176636.5">
    <property type="protein sequence ID" value="ENSMUSP00000135115.2"/>
    <property type="gene ID" value="ENSMUSG00000032015.17"/>
</dbReference>
<dbReference type="GeneID" id="18988"/>
<dbReference type="KEGG" id="mmu:18988"/>
<dbReference type="AGR" id="MGI:102565"/>
<dbReference type="CTD" id="25833"/>
<dbReference type="MGI" id="MGI:102565">
    <property type="gene designation" value="Pou2f3"/>
</dbReference>
<dbReference type="VEuPathDB" id="HostDB:ENSMUSG00000032015"/>
<dbReference type="eggNOG" id="KOG3802">
    <property type="taxonomic scope" value="Eukaryota"/>
</dbReference>
<dbReference type="GeneTree" id="ENSGT00940000157627"/>
<dbReference type="InParanoid" id="P31362"/>
<dbReference type="OMA" id="HTEIKMS"/>
<dbReference type="OrthoDB" id="6358449at2759"/>
<dbReference type="PhylomeDB" id="P31362"/>
<dbReference type="TreeFam" id="TF316413"/>
<dbReference type="BioGRID-ORCS" id="18988">
    <property type="hits" value="3 hits in 77 CRISPR screens"/>
</dbReference>
<dbReference type="ChiTaRS" id="Pou2f3">
    <property type="organism name" value="mouse"/>
</dbReference>
<dbReference type="PRO" id="PR:P31362"/>
<dbReference type="Proteomes" id="UP000000589">
    <property type="component" value="Chromosome 9"/>
</dbReference>
<dbReference type="RNAct" id="P31362">
    <property type="molecule type" value="protein"/>
</dbReference>
<dbReference type="Bgee" id="ENSMUSG00000032015">
    <property type="expression patterns" value="Expressed in lip and 34 other cell types or tissues"/>
</dbReference>
<dbReference type="GO" id="GO:0005829">
    <property type="term" value="C:cytosol"/>
    <property type="evidence" value="ECO:0007669"/>
    <property type="project" value="Ensembl"/>
</dbReference>
<dbReference type="GO" id="GO:0016604">
    <property type="term" value="C:nuclear body"/>
    <property type="evidence" value="ECO:0007669"/>
    <property type="project" value="Ensembl"/>
</dbReference>
<dbReference type="GO" id="GO:0005730">
    <property type="term" value="C:nucleolus"/>
    <property type="evidence" value="ECO:0007669"/>
    <property type="project" value="Ensembl"/>
</dbReference>
<dbReference type="GO" id="GO:0005634">
    <property type="term" value="C:nucleus"/>
    <property type="evidence" value="ECO:0000314"/>
    <property type="project" value="UniProtKB"/>
</dbReference>
<dbReference type="GO" id="GO:0005886">
    <property type="term" value="C:plasma membrane"/>
    <property type="evidence" value="ECO:0007669"/>
    <property type="project" value="Ensembl"/>
</dbReference>
<dbReference type="GO" id="GO:0005667">
    <property type="term" value="C:transcription regulator complex"/>
    <property type="evidence" value="ECO:0000314"/>
    <property type="project" value="MGI"/>
</dbReference>
<dbReference type="GO" id="GO:0003677">
    <property type="term" value="F:DNA binding"/>
    <property type="evidence" value="ECO:0000314"/>
    <property type="project" value="MGI"/>
</dbReference>
<dbReference type="GO" id="GO:0001228">
    <property type="term" value="F:DNA-binding transcription activator activity, RNA polymerase II-specific"/>
    <property type="evidence" value="ECO:0007669"/>
    <property type="project" value="Ensembl"/>
</dbReference>
<dbReference type="GO" id="GO:0042802">
    <property type="term" value="F:identical protein binding"/>
    <property type="evidence" value="ECO:0000353"/>
    <property type="project" value="MGI"/>
</dbReference>
<dbReference type="GO" id="GO:0000978">
    <property type="term" value="F:RNA polymerase II cis-regulatory region sequence-specific DNA binding"/>
    <property type="evidence" value="ECO:0007669"/>
    <property type="project" value="Ensembl"/>
</dbReference>
<dbReference type="GO" id="GO:0043565">
    <property type="term" value="F:sequence-specific DNA binding"/>
    <property type="evidence" value="ECO:0000314"/>
    <property type="project" value="MGI"/>
</dbReference>
<dbReference type="GO" id="GO:0030154">
    <property type="term" value="P:cell differentiation"/>
    <property type="evidence" value="ECO:0000315"/>
    <property type="project" value="UniProtKB"/>
</dbReference>
<dbReference type="GO" id="GO:0008544">
    <property type="term" value="P:epidermis development"/>
    <property type="evidence" value="ECO:0000316"/>
    <property type="project" value="MGI"/>
</dbReference>
<dbReference type="GO" id="GO:0030216">
    <property type="term" value="P:keratinocyte differentiation"/>
    <property type="evidence" value="ECO:0000316"/>
    <property type="project" value="MGI"/>
</dbReference>
<dbReference type="GO" id="GO:0043922">
    <property type="term" value="P:negative regulation by host of viral transcription"/>
    <property type="evidence" value="ECO:0007669"/>
    <property type="project" value="Ensembl"/>
</dbReference>
<dbReference type="GO" id="GO:0045944">
    <property type="term" value="P:positive regulation of transcription by RNA polymerase II"/>
    <property type="evidence" value="ECO:0000314"/>
    <property type="project" value="MGI"/>
</dbReference>
<dbReference type="GO" id="GO:0042060">
    <property type="term" value="P:wound healing"/>
    <property type="evidence" value="ECO:0000315"/>
    <property type="project" value="MGI"/>
</dbReference>
<dbReference type="CDD" id="cd00086">
    <property type="entry name" value="homeodomain"/>
    <property type="match status" value="1"/>
</dbReference>
<dbReference type="FunFam" id="1.10.10.60:FF:000005">
    <property type="entry name" value="POU domain protein"/>
    <property type="match status" value="1"/>
</dbReference>
<dbReference type="FunFam" id="1.10.260.40:FF:000001">
    <property type="entry name" value="POU domain protein"/>
    <property type="match status" value="1"/>
</dbReference>
<dbReference type="Gene3D" id="1.10.10.60">
    <property type="entry name" value="Homeodomain-like"/>
    <property type="match status" value="1"/>
</dbReference>
<dbReference type="Gene3D" id="1.10.260.40">
    <property type="entry name" value="lambda repressor-like DNA-binding domains"/>
    <property type="match status" value="1"/>
</dbReference>
<dbReference type="InterPro" id="IPR001356">
    <property type="entry name" value="HD"/>
</dbReference>
<dbReference type="InterPro" id="IPR017970">
    <property type="entry name" value="Homeobox_CS"/>
</dbReference>
<dbReference type="InterPro" id="IPR009057">
    <property type="entry name" value="Homeodomain-like_sf"/>
</dbReference>
<dbReference type="InterPro" id="IPR010982">
    <property type="entry name" value="Lambda_DNA-bd_dom_sf"/>
</dbReference>
<dbReference type="InterPro" id="IPR013847">
    <property type="entry name" value="POU"/>
</dbReference>
<dbReference type="InterPro" id="IPR000327">
    <property type="entry name" value="POU_dom"/>
</dbReference>
<dbReference type="InterPro" id="IPR050255">
    <property type="entry name" value="POU_domain_TF"/>
</dbReference>
<dbReference type="InterPro" id="IPR000972">
    <property type="entry name" value="TF_octamer"/>
</dbReference>
<dbReference type="PANTHER" id="PTHR11636">
    <property type="entry name" value="POU DOMAIN"/>
    <property type="match status" value="1"/>
</dbReference>
<dbReference type="PANTHER" id="PTHR11636:SF81">
    <property type="entry name" value="POU DOMAIN, CLASS 2, TRANSCRIPTION FACTOR 3"/>
    <property type="match status" value="1"/>
</dbReference>
<dbReference type="Pfam" id="PF00046">
    <property type="entry name" value="Homeodomain"/>
    <property type="match status" value="1"/>
</dbReference>
<dbReference type="Pfam" id="PF00157">
    <property type="entry name" value="Pou"/>
    <property type="match status" value="1"/>
</dbReference>
<dbReference type="PRINTS" id="PR00029">
    <property type="entry name" value="OCTAMER"/>
</dbReference>
<dbReference type="PRINTS" id="PR00028">
    <property type="entry name" value="POUDOMAIN"/>
</dbReference>
<dbReference type="SMART" id="SM00389">
    <property type="entry name" value="HOX"/>
    <property type="match status" value="1"/>
</dbReference>
<dbReference type="SMART" id="SM00352">
    <property type="entry name" value="POU"/>
    <property type="match status" value="1"/>
</dbReference>
<dbReference type="SUPFAM" id="SSF46689">
    <property type="entry name" value="Homeodomain-like"/>
    <property type="match status" value="1"/>
</dbReference>
<dbReference type="SUPFAM" id="SSF47413">
    <property type="entry name" value="lambda repressor-like DNA-binding domains"/>
    <property type="match status" value="1"/>
</dbReference>
<dbReference type="PROSITE" id="PS00027">
    <property type="entry name" value="HOMEOBOX_1"/>
    <property type="match status" value="1"/>
</dbReference>
<dbReference type="PROSITE" id="PS50071">
    <property type="entry name" value="HOMEOBOX_2"/>
    <property type="match status" value="1"/>
</dbReference>
<dbReference type="PROSITE" id="PS00035">
    <property type="entry name" value="POU_1"/>
    <property type="match status" value="1"/>
</dbReference>
<dbReference type="PROSITE" id="PS00465">
    <property type="entry name" value="POU_2"/>
    <property type="match status" value="1"/>
</dbReference>
<dbReference type="PROSITE" id="PS51179">
    <property type="entry name" value="POU_3"/>
    <property type="match status" value="1"/>
</dbReference>
<sequence>MVNLEPMHTEIKMSGDVADSTDTRSTFGQVEPGNDRNGLDFNRQIKTEDLGDSLQQTLSHRPCHLSQGPTMMPGNQMSGDMASLHPLQQLVLVPGHLQSVSQFLLSQTPPGQQGLQPNLLSFPQQQSTLLLPQTGPGLASQAVGRPGLSGSSLEPHLDAPQHLPGPKHLPGPGGNDEPTDLEELEKFAKTFKQRRIKLGFTQGDVGLAMGKLYGNDFSQTTISRFEALNLSFKNMCKLKPLLEKWLNDAESSPSDPSASTPSSYPTLSEVFGRKRKKRTSIETNIRLTLEKRFQDNPKPSSEEISMIAEQLSMEKEVVRVWFCNRRQKEKRINCPVATPVKPPIYNSRLVSPSGSLGPLSVPPVHSTMPGTVTSSCSPGNNSRPSSPGSGLHASSPTASQNNSKAAMNSSSSSSFNSSGSWYRWNHPTYLH</sequence>
<name>PO2F3_MOUSE</name>
<accession>P31362</accession>
<accession>H3BJT4</accession>
<reference key="1">
    <citation type="journal article" date="1993" name="Nucleic Acids Res.">
        <title>Cloning, chromosomal localization and expression pattern of the POU domain gene Oct-11.</title>
        <authorList>
            <person name="Goldsborough A.S."/>
            <person name="Healy L.E."/>
            <person name="Copeland N.G."/>
            <person name="Gilbert D.J."/>
            <person name="Jenkins N.A."/>
            <person name="Willison K.R."/>
            <person name="Ashworth A."/>
        </authorList>
    </citation>
    <scope>NUCLEOTIDE SEQUENCE [MRNA]</scope>
    <scope>FUNCTION</scope>
    <scope>TISSUE SPECIFICITY</scope>
    <source>
        <tissue>Thymus</tissue>
    </source>
</reference>
<reference key="2">
    <citation type="journal article" date="1993" name="Gene">
        <title>Epoc-1: a POU-domain gene expressed in murine epidermal basal cells and thymic stromal cells.</title>
        <authorList>
            <person name="Yukawa K."/>
            <person name="Yasui T."/>
            <person name="Yamamoto A."/>
            <person name="Shiku H."/>
            <person name="Kishimoto T."/>
            <person name="Kikutani H."/>
        </authorList>
    </citation>
    <scope>NUCLEOTIDE SEQUENCE [MRNA]</scope>
    <scope>TISSUE SPECIFICITY</scope>
    <source>
        <strain>BALB/cJ</strain>
        <tissue>Thymus</tissue>
    </source>
</reference>
<reference key="3">
    <citation type="journal article" date="2009" name="PLoS Biol.">
        <title>Lineage-specific biology revealed by a finished genome assembly of the mouse.</title>
        <authorList>
            <person name="Church D.M."/>
            <person name="Goodstadt L."/>
            <person name="Hillier L.W."/>
            <person name="Zody M.C."/>
            <person name="Goldstein S."/>
            <person name="She X."/>
            <person name="Bult C.J."/>
            <person name="Agarwala R."/>
            <person name="Cherry J.L."/>
            <person name="DiCuccio M."/>
            <person name="Hlavina W."/>
            <person name="Kapustin Y."/>
            <person name="Meric P."/>
            <person name="Maglott D."/>
            <person name="Birtle Z."/>
            <person name="Marques A.C."/>
            <person name="Graves T."/>
            <person name="Zhou S."/>
            <person name="Teague B."/>
            <person name="Potamousis K."/>
            <person name="Churas C."/>
            <person name="Place M."/>
            <person name="Herschleb J."/>
            <person name="Runnheim R."/>
            <person name="Forrest D."/>
            <person name="Amos-Landgraf J."/>
            <person name="Schwartz D.C."/>
            <person name="Cheng Z."/>
            <person name="Lindblad-Toh K."/>
            <person name="Eichler E.E."/>
            <person name="Ponting C.P."/>
        </authorList>
    </citation>
    <scope>NUCLEOTIDE SEQUENCE [LARGE SCALE GENOMIC DNA]</scope>
    <source>
        <strain>C57BL/6J</strain>
    </source>
</reference>
<reference key="4">
    <citation type="journal article" date="1997" name="Genes Dev.">
        <title>Functions of the POU domain genes Skn-1a/i and Tst-1/Oct-6/SCIP in epidermal differentiation.</title>
        <authorList>
            <person name="Andersen B."/>
            <person name="Weinberg W.C."/>
            <person name="Rennekampff O."/>
            <person name="McEvilly R.J."/>
            <person name="Bermingham J.R. Jr."/>
            <person name="Hooshmand F."/>
            <person name="Vasilyev V."/>
            <person name="Hansbrough J.F."/>
            <person name="Pittelkow M.R."/>
            <person name="Yuspa S.H."/>
            <person name="Rosenfeld M.G."/>
        </authorList>
    </citation>
    <scope>FUNCTION</scope>
    <scope>SUBCELLULAR LOCATION</scope>
    <scope>DISRUPTION PHENOTYPE</scope>
</reference>